<name>TIRC_ORYSJ</name>
<sequence length="568" mass="62392">MVFFPEEVVEHILGFLASHRDRNAVSLVCREWYRVERLSRRSVLVRNCYAARPERVHARFPGLRSLSVKGRPRFVPAGWGAAARPWVAACVAACPGLEELRLKRMVVTDGCLKLLACSFPNLKSLVLVGCQGFSTDGLATVATNCRFMKELDLQESLVEDRDSRWLGCFPKPSTLLESLNFSCLTGEVNSPALEILVARSPNLRSLRLNRSVPLDVLARILCRRPRLVDLCTGSFVRGNIVGAYAGLFNSFQHCSLLKSLSGFWDATSLFIPVIAPVCKNLTCLNLSSAPMVRSAYLIEFICQCKKLQQLWVLDHIGDEGLKIVASSCIQLQELRVFPANANARASTVTEEGLVAISAGCNKLQSVLYFCQRMTNSALITVAKNCPRFTSFRLCVLDPGSADAVTGQPLDEGYGAIVQSCKGLRRLCLSGLLTDTVFLYIGMYAERLEMLSVAFAGDTDDGMTYVLNGCKNLKKLEIRDSPFGDSALLAGMHQYEAMRSLWLSSCNVTLGGCKSLAASMANLNIEVMNRAASINEADNANDAKKVKKLYIYRTVAGPRGDAPEFISTF</sequence>
<feature type="chain" id="PRO_0000370733" description="Transport inhibitor response 1-like protein Os11g0515500">
    <location>
        <begin position="1"/>
        <end position="568"/>
    </location>
</feature>
<feature type="domain" description="F-box">
    <location>
        <begin position="1"/>
        <end position="45"/>
    </location>
</feature>
<feature type="region of interest" description="Interaction with auxin-responsive proteins" evidence="1">
    <location>
        <begin position="338"/>
        <end position="343"/>
    </location>
</feature>
<feature type="region of interest" description="Interaction with auxin-responsive proteins" evidence="1">
    <location>
        <begin position="394"/>
        <end position="398"/>
    </location>
</feature>
<feature type="region of interest" description="Interaction with auxin-responsive proteins" evidence="1">
    <location>
        <begin position="453"/>
        <end position="454"/>
    </location>
</feature>
<feature type="binding site" evidence="1">
    <location>
        <position position="69"/>
    </location>
    <ligand>
        <name>1D-myo-inositol hexakisphosphate</name>
        <dbReference type="ChEBI" id="CHEBI:58130"/>
    </ligand>
</feature>
<feature type="binding site" evidence="1">
    <location>
        <begin position="103"/>
        <end position="104"/>
    </location>
    <ligand>
        <name>1D-myo-inositol hexakisphosphate</name>
        <dbReference type="ChEBI" id="CHEBI:58130"/>
    </ligand>
</feature>
<feature type="binding site" evidence="1">
    <location>
        <position position="335"/>
    </location>
    <ligand>
        <name>1D-myo-inositol hexakisphosphate</name>
        <dbReference type="ChEBI" id="CHEBI:58130"/>
    </ligand>
</feature>
<feature type="binding site" evidence="1">
    <location>
        <begin position="390"/>
        <end position="392"/>
    </location>
    <ligand>
        <name>1D-myo-inositol hexakisphosphate</name>
        <dbReference type="ChEBI" id="CHEBI:58130"/>
    </ligand>
</feature>
<feature type="binding site" evidence="1">
    <location>
        <position position="425"/>
    </location>
    <ligand>
        <name>1D-myo-inositol hexakisphosphate</name>
        <dbReference type="ChEBI" id="CHEBI:58130"/>
    </ligand>
</feature>
<feature type="binding site" evidence="1">
    <location>
        <begin position="473"/>
        <end position="474"/>
    </location>
    <ligand>
        <name>1D-myo-inositol hexakisphosphate</name>
        <dbReference type="ChEBI" id="CHEBI:58130"/>
    </ligand>
</feature>
<feature type="binding site" evidence="1">
    <location>
        <position position="498"/>
    </location>
    <ligand>
        <name>1D-myo-inositol hexakisphosphate</name>
        <dbReference type="ChEBI" id="CHEBI:58130"/>
    </ligand>
</feature>
<feature type="site" description="Interaction with auxin-responsive proteins" evidence="1">
    <location>
        <position position="155"/>
    </location>
</feature>
<feature type="site" description="Interaction with auxin-responsive proteins" evidence="1">
    <location>
        <position position="369"/>
    </location>
</feature>
<feature type="site" description="Interaction with auxin-responsive proteins" evidence="1">
    <location>
        <position position="478"/>
    </location>
</feature>
<accession>Q2R3K5</accession>
<accession>A0A0P0Y2W0</accession>
<accession>Q0ISI1</accession>
<evidence type="ECO:0000250" key="1"/>
<keyword id="KW-0927">Auxin signaling pathway</keyword>
<keyword id="KW-0539">Nucleus</keyword>
<keyword id="KW-1185">Reference proteome</keyword>
<keyword id="KW-0833">Ubl conjugation pathway</keyword>
<reference key="1">
    <citation type="journal article" date="2005" name="BMC Biol.">
        <title>The sequence of rice chromosomes 11 and 12, rich in disease resistance genes and recent gene duplications.</title>
        <authorList>
            <consortium name="The rice chromosomes 11 and 12 sequencing consortia"/>
        </authorList>
    </citation>
    <scope>NUCLEOTIDE SEQUENCE [LARGE SCALE GENOMIC DNA]</scope>
    <source>
        <strain>cv. Nipponbare</strain>
    </source>
</reference>
<reference key="2">
    <citation type="journal article" date="2005" name="Nature">
        <title>The map-based sequence of the rice genome.</title>
        <authorList>
            <consortium name="International rice genome sequencing project (IRGSP)"/>
        </authorList>
    </citation>
    <scope>NUCLEOTIDE SEQUENCE [LARGE SCALE GENOMIC DNA]</scope>
    <source>
        <strain>cv. Nipponbare</strain>
    </source>
</reference>
<reference key="3">
    <citation type="journal article" date="2008" name="Nucleic Acids Res.">
        <title>The rice annotation project database (RAP-DB): 2008 update.</title>
        <authorList>
            <consortium name="The rice annotation project (RAP)"/>
        </authorList>
    </citation>
    <scope>GENOME REANNOTATION</scope>
    <source>
        <strain>cv. Nipponbare</strain>
    </source>
</reference>
<reference key="4">
    <citation type="journal article" date="2013" name="Rice">
        <title>Improvement of the Oryza sativa Nipponbare reference genome using next generation sequence and optical map data.</title>
        <authorList>
            <person name="Kawahara Y."/>
            <person name="de la Bastide M."/>
            <person name="Hamilton J.P."/>
            <person name="Kanamori H."/>
            <person name="McCombie W.R."/>
            <person name="Ouyang S."/>
            <person name="Schwartz D.C."/>
            <person name="Tanaka T."/>
            <person name="Wu J."/>
            <person name="Zhou S."/>
            <person name="Childs K.L."/>
            <person name="Davidson R.M."/>
            <person name="Lin H."/>
            <person name="Quesada-Ocampo L."/>
            <person name="Vaillancourt B."/>
            <person name="Sakai H."/>
            <person name="Lee S.S."/>
            <person name="Kim J."/>
            <person name="Numa H."/>
            <person name="Itoh T."/>
            <person name="Buell C.R."/>
            <person name="Matsumoto T."/>
        </authorList>
    </citation>
    <scope>GENOME REANNOTATION</scope>
    <source>
        <strain>cv. Nipponbare</strain>
    </source>
</reference>
<reference key="5">
    <citation type="journal article" date="2003" name="Science">
        <title>Collection, mapping, and annotation of over 28,000 cDNA clones from japonica rice.</title>
        <authorList>
            <consortium name="The rice full-length cDNA consortium"/>
        </authorList>
    </citation>
    <scope>NUCLEOTIDE SEQUENCE [LARGE SCALE MRNA]</scope>
    <source>
        <strain>cv. Nipponbare</strain>
    </source>
</reference>
<proteinExistence type="evidence at transcript level"/>
<comment type="pathway">
    <text>Protein modification; protein ubiquitination.</text>
</comment>
<comment type="subunit">
    <text evidence="1">Part of a SCF (SKP1-cullin-F-box) protein ligase complex. May interact with auxin and auxin-responsive proteins (By similarity).</text>
</comment>
<comment type="subcellular location">
    <subcellularLocation>
        <location evidence="1">Nucleus</location>
    </subcellularLocation>
</comment>
<comment type="domain">
    <text evidence="1">The F-box is necessary for the interaction with SKP1.</text>
</comment>
<comment type="miscellaneous">
    <text evidence="1">The myo-inositol hexakisphosphate acts as a structural cofactor.</text>
</comment>
<dbReference type="EMBL" id="DP000010">
    <property type="protein sequence ID" value="ABA93930.1"/>
    <property type="molecule type" value="Genomic_DNA"/>
</dbReference>
<dbReference type="EMBL" id="AP008217">
    <property type="protein sequence ID" value="BAF28334.2"/>
    <property type="molecule type" value="Genomic_DNA"/>
</dbReference>
<dbReference type="EMBL" id="AP014967">
    <property type="protein sequence ID" value="BAT14190.1"/>
    <property type="molecule type" value="Genomic_DNA"/>
</dbReference>
<dbReference type="EMBL" id="AK072358">
    <property type="protein sequence ID" value="BAG92936.1"/>
    <property type="molecule type" value="mRNA"/>
</dbReference>
<dbReference type="RefSeq" id="XP_015617534.1">
    <property type="nucleotide sequence ID" value="XM_015762048.1"/>
</dbReference>
<dbReference type="SMR" id="Q2R3K5"/>
<dbReference type="FunCoup" id="Q2R3K5">
    <property type="interactions" value="1"/>
</dbReference>
<dbReference type="STRING" id="39947.Q2R3K5"/>
<dbReference type="PaxDb" id="39947-Q2R3K5"/>
<dbReference type="EnsemblPlants" id="Os11t0515500-01">
    <property type="protein sequence ID" value="Os11t0515500-01"/>
    <property type="gene ID" value="Os11g0515500"/>
</dbReference>
<dbReference type="Gramene" id="Os11t0515500-01">
    <property type="protein sequence ID" value="Os11t0515500-01"/>
    <property type="gene ID" value="Os11g0515500"/>
</dbReference>
<dbReference type="KEGG" id="dosa:Os11g0515500"/>
<dbReference type="eggNOG" id="KOG1947">
    <property type="taxonomic scope" value="Eukaryota"/>
</dbReference>
<dbReference type="HOGENOM" id="CLU_022456_1_0_1"/>
<dbReference type="InParanoid" id="Q2R3K5"/>
<dbReference type="OMA" id="CNCYAVR"/>
<dbReference type="OrthoDB" id="423607at2759"/>
<dbReference type="PlantReactome" id="R-OSA-5608118">
    <property type="pathway name" value="Auxin signalling"/>
</dbReference>
<dbReference type="UniPathway" id="UPA00143"/>
<dbReference type="Proteomes" id="UP000000763">
    <property type="component" value="Chromosome 11"/>
</dbReference>
<dbReference type="Proteomes" id="UP000059680">
    <property type="component" value="Chromosome 11"/>
</dbReference>
<dbReference type="GO" id="GO:0005634">
    <property type="term" value="C:nucleus"/>
    <property type="evidence" value="ECO:0007669"/>
    <property type="project" value="UniProtKB-SubCell"/>
</dbReference>
<dbReference type="GO" id="GO:0019005">
    <property type="term" value="C:SCF ubiquitin ligase complex"/>
    <property type="evidence" value="ECO:0000250"/>
    <property type="project" value="UniProtKB"/>
</dbReference>
<dbReference type="GO" id="GO:0010011">
    <property type="term" value="F:auxin binding"/>
    <property type="evidence" value="ECO:0000250"/>
    <property type="project" value="UniProtKB"/>
</dbReference>
<dbReference type="GO" id="GO:0000822">
    <property type="term" value="F:inositol hexakisphosphate binding"/>
    <property type="evidence" value="ECO:0000250"/>
    <property type="project" value="UniProtKB"/>
</dbReference>
<dbReference type="GO" id="GO:0009734">
    <property type="term" value="P:auxin-activated signaling pathway"/>
    <property type="evidence" value="ECO:0000250"/>
    <property type="project" value="UniProtKB"/>
</dbReference>
<dbReference type="GO" id="GO:0016567">
    <property type="term" value="P:protein ubiquitination"/>
    <property type="evidence" value="ECO:0007669"/>
    <property type="project" value="UniProtKB-UniPathway"/>
</dbReference>
<dbReference type="GO" id="GO:0031146">
    <property type="term" value="P:SCF-dependent proteasomal ubiquitin-dependent protein catabolic process"/>
    <property type="evidence" value="ECO:0000318"/>
    <property type="project" value="GO_Central"/>
</dbReference>
<dbReference type="CDD" id="cd22159">
    <property type="entry name" value="F-box_AtTIR1-like"/>
    <property type="match status" value="1"/>
</dbReference>
<dbReference type="FunFam" id="1.20.1280.50:FF:000006">
    <property type="entry name" value="Transport inhibitor response 1"/>
    <property type="match status" value="1"/>
</dbReference>
<dbReference type="FunFam" id="3.80.10.10:FF:000029">
    <property type="entry name" value="Transport inhibitor response 1"/>
    <property type="match status" value="1"/>
</dbReference>
<dbReference type="Gene3D" id="1.20.1280.50">
    <property type="match status" value="1"/>
</dbReference>
<dbReference type="Gene3D" id="3.80.10.10">
    <property type="entry name" value="Ribonuclease Inhibitor"/>
    <property type="match status" value="1"/>
</dbReference>
<dbReference type="InterPro" id="IPR041567">
    <property type="entry name" value="COI1_F-box"/>
</dbReference>
<dbReference type="InterPro" id="IPR006553">
    <property type="entry name" value="Leu-rich_rpt_Cys-con_subtyp"/>
</dbReference>
<dbReference type="InterPro" id="IPR032675">
    <property type="entry name" value="LRR_dom_sf"/>
</dbReference>
<dbReference type="InterPro" id="IPR041101">
    <property type="entry name" value="Transp_inhibit"/>
</dbReference>
<dbReference type="PANTHER" id="PTHR16134">
    <property type="entry name" value="F-BOX/TPR REPEAT PROTEIN POF3"/>
    <property type="match status" value="1"/>
</dbReference>
<dbReference type="PANTHER" id="PTHR16134:SF59">
    <property type="entry name" value="TRANSPORT INHIBITOR RESPONSE 1-LIKE PROTEIN OS11G0515500"/>
    <property type="match status" value="1"/>
</dbReference>
<dbReference type="Pfam" id="PF18511">
    <property type="entry name" value="F-box_5"/>
    <property type="match status" value="1"/>
</dbReference>
<dbReference type="Pfam" id="PF18791">
    <property type="entry name" value="Transp_inhibit"/>
    <property type="match status" value="1"/>
</dbReference>
<dbReference type="SMART" id="SM00367">
    <property type="entry name" value="LRR_CC"/>
    <property type="match status" value="6"/>
</dbReference>
<dbReference type="SUPFAM" id="SSF52047">
    <property type="entry name" value="RNI-like"/>
    <property type="match status" value="1"/>
</dbReference>
<organism>
    <name type="scientific">Oryza sativa subsp. japonica</name>
    <name type="common">Rice</name>
    <dbReference type="NCBI Taxonomy" id="39947"/>
    <lineage>
        <taxon>Eukaryota</taxon>
        <taxon>Viridiplantae</taxon>
        <taxon>Streptophyta</taxon>
        <taxon>Embryophyta</taxon>
        <taxon>Tracheophyta</taxon>
        <taxon>Spermatophyta</taxon>
        <taxon>Magnoliopsida</taxon>
        <taxon>Liliopsida</taxon>
        <taxon>Poales</taxon>
        <taxon>Poaceae</taxon>
        <taxon>BOP clade</taxon>
        <taxon>Oryzoideae</taxon>
        <taxon>Oryzeae</taxon>
        <taxon>Oryzinae</taxon>
        <taxon>Oryza</taxon>
        <taxon>Oryza sativa</taxon>
    </lineage>
</organism>
<gene>
    <name type="ordered locus">Os11g0515500</name>
    <name type="ordered locus">LOC_Os11g31620</name>
</gene>
<protein>
    <recommendedName>
        <fullName>Transport inhibitor response 1-like protein Os11g0515500</fullName>
        <shortName>TIR1-like protein</shortName>
    </recommendedName>
</protein>